<proteinExistence type="inferred from homology"/>
<keyword id="KW-0997">Cell inner membrane</keyword>
<keyword id="KW-1003">Cell membrane</keyword>
<keyword id="KW-0472">Membrane</keyword>
<keyword id="KW-0653">Protein transport</keyword>
<keyword id="KW-1185">Reference proteome</keyword>
<keyword id="KW-0811">Translocation</keyword>
<keyword id="KW-0812">Transmembrane</keyword>
<keyword id="KW-1133">Transmembrane helix</keyword>
<keyword id="KW-0813">Transport</keyword>
<protein>
    <recommendedName>
        <fullName evidence="1">Sec-independent protein translocase protein TatB</fullName>
    </recommendedName>
</protein>
<feature type="chain" id="PRO_0000301136" description="Sec-independent protein translocase protein TatB">
    <location>
        <begin position="1"/>
        <end position="195"/>
    </location>
</feature>
<feature type="transmembrane region" description="Helical" evidence="1">
    <location>
        <begin position="1"/>
        <end position="21"/>
    </location>
</feature>
<feature type="region of interest" description="Disordered" evidence="2">
    <location>
        <begin position="166"/>
        <end position="195"/>
    </location>
</feature>
<feature type="compositionally biased region" description="Polar residues" evidence="2">
    <location>
        <begin position="183"/>
        <end position="195"/>
    </location>
</feature>
<sequence>MFDIGFSELVLIFIVGLVVLGPQRLPIAIKTVMGWIRTIRGLAANVQNELAQELKLQELQESIKKAEKLNLTTLSPELSKTVEELKQSAQKMQSDLDAAKGEITKLTDEQVANIQNNIAQEEQNLATVQPETLQKSEENQPLVDTANAEENPSLSPAEIAEQAELDESQFAAYYPPDDDLASPTPSQPQDKQNVS</sequence>
<reference key="1">
    <citation type="journal article" date="2008" name="J. Bacteriol.">
        <title>The complete genome sequence of Actinobacillus pleuropneumoniae L20 (serotype 5b).</title>
        <authorList>
            <person name="Foote S.J."/>
            <person name="Bosse J.T."/>
            <person name="Bouevitch A.B."/>
            <person name="Langford P.R."/>
            <person name="Young N.M."/>
            <person name="Nash J.H.E."/>
        </authorList>
    </citation>
    <scope>NUCLEOTIDE SEQUENCE [LARGE SCALE GENOMIC DNA]</scope>
    <source>
        <strain>L20</strain>
    </source>
</reference>
<dbReference type="EMBL" id="CP000569">
    <property type="protein sequence ID" value="ABN75060.1"/>
    <property type="molecule type" value="Genomic_DNA"/>
</dbReference>
<dbReference type="RefSeq" id="WP_005613515.1">
    <property type="nucleotide sequence ID" value="NC_009053.1"/>
</dbReference>
<dbReference type="SMR" id="A3N3S4"/>
<dbReference type="STRING" id="416269.APL_1986"/>
<dbReference type="EnsemblBacteria" id="ABN75060">
    <property type="protein sequence ID" value="ABN75060"/>
    <property type="gene ID" value="APL_1986"/>
</dbReference>
<dbReference type="KEGG" id="apl:APL_1986"/>
<dbReference type="eggNOG" id="COG1826">
    <property type="taxonomic scope" value="Bacteria"/>
</dbReference>
<dbReference type="HOGENOM" id="CLU_086034_1_0_6"/>
<dbReference type="Proteomes" id="UP000001432">
    <property type="component" value="Chromosome"/>
</dbReference>
<dbReference type="GO" id="GO:0033281">
    <property type="term" value="C:TAT protein transport complex"/>
    <property type="evidence" value="ECO:0007669"/>
    <property type="project" value="UniProtKB-UniRule"/>
</dbReference>
<dbReference type="GO" id="GO:0008320">
    <property type="term" value="F:protein transmembrane transporter activity"/>
    <property type="evidence" value="ECO:0007669"/>
    <property type="project" value="UniProtKB-UniRule"/>
</dbReference>
<dbReference type="GO" id="GO:0043953">
    <property type="term" value="P:protein transport by the Tat complex"/>
    <property type="evidence" value="ECO:0007669"/>
    <property type="project" value="UniProtKB-UniRule"/>
</dbReference>
<dbReference type="Gene3D" id="1.20.5.3310">
    <property type="match status" value="1"/>
</dbReference>
<dbReference type="HAMAP" id="MF_00237">
    <property type="entry name" value="TatB"/>
    <property type="match status" value="1"/>
</dbReference>
<dbReference type="InterPro" id="IPR018448">
    <property type="entry name" value="TatB"/>
</dbReference>
<dbReference type="NCBIfam" id="TIGR01410">
    <property type="entry name" value="tatB"/>
    <property type="match status" value="1"/>
</dbReference>
<dbReference type="PANTHER" id="PTHR33162">
    <property type="entry name" value="SEC-INDEPENDENT PROTEIN TRANSLOCASE PROTEIN TATA, CHLOROPLASTIC"/>
    <property type="match status" value="1"/>
</dbReference>
<dbReference type="PANTHER" id="PTHR33162:SF1">
    <property type="entry name" value="SEC-INDEPENDENT PROTEIN TRANSLOCASE PROTEIN TATA, CHLOROPLASTIC"/>
    <property type="match status" value="1"/>
</dbReference>
<dbReference type="PRINTS" id="PR01506">
    <property type="entry name" value="TATBPROTEIN"/>
</dbReference>
<organism>
    <name type="scientific">Actinobacillus pleuropneumoniae serotype 5b (strain L20)</name>
    <dbReference type="NCBI Taxonomy" id="416269"/>
    <lineage>
        <taxon>Bacteria</taxon>
        <taxon>Pseudomonadati</taxon>
        <taxon>Pseudomonadota</taxon>
        <taxon>Gammaproteobacteria</taxon>
        <taxon>Pasteurellales</taxon>
        <taxon>Pasteurellaceae</taxon>
        <taxon>Actinobacillus</taxon>
    </lineage>
</organism>
<comment type="function">
    <text evidence="1">Part of the twin-arginine translocation (Tat) system that transports large folded proteins containing a characteristic twin-arginine motif in their signal peptide across membranes. Together with TatC, TatB is part of a receptor directly interacting with Tat signal peptides. TatB may form an oligomeric binding site that transiently accommodates folded Tat precursor proteins before their translocation.</text>
</comment>
<comment type="subunit">
    <text evidence="1">The Tat system comprises two distinct complexes: a TatABC complex, containing multiple copies of TatA, TatB and TatC subunits, and a separate TatA complex, containing only TatA subunits. Substrates initially bind to the TatABC complex, which probably triggers association of the separate TatA complex to form the active translocon.</text>
</comment>
<comment type="subcellular location">
    <subcellularLocation>
        <location evidence="1">Cell inner membrane</location>
        <topology evidence="1">Single-pass membrane protein</topology>
    </subcellularLocation>
</comment>
<comment type="similarity">
    <text evidence="1">Belongs to the TatB family.</text>
</comment>
<evidence type="ECO:0000255" key="1">
    <source>
        <dbReference type="HAMAP-Rule" id="MF_00237"/>
    </source>
</evidence>
<evidence type="ECO:0000256" key="2">
    <source>
        <dbReference type="SAM" id="MobiDB-lite"/>
    </source>
</evidence>
<gene>
    <name evidence="1" type="primary">tatB</name>
    <name type="ordered locus">APL_1986</name>
</gene>
<name>TATB_ACTP2</name>
<accession>A3N3S4</accession>